<sequence>MESSSSGTTSSTIQTSSGSEESLMEQRKRKRMLSNRESARRSRMKKQKLLDDLTAQVNHLKKENTEIVTSVSITTQHYLTVEAENSVLRAQLDELNHRLQSLNDIIEFLDSSNNNNNNNMGMCSNPLVGLECDDFFVNQMNMSYIMNQPLMASSDALMY</sequence>
<keyword id="KW-0238">DNA-binding</keyword>
<keyword id="KW-0539">Nucleus</keyword>
<keyword id="KW-1185">Reference proteome</keyword>
<keyword id="KW-0346">Stress response</keyword>
<keyword id="KW-0804">Transcription</keyword>
<keyword id="KW-0805">Transcription regulation</keyword>
<accession>O65683</accession>
<accession>P94060</accession>
<name>BZP11_ARATH</name>
<proteinExistence type="evidence at protein level"/>
<gene>
    <name evidence="12" type="primary">BZIP11</name>
    <name evidence="13" type="synonym">ATB2</name>
    <name evidence="14" type="synonym">GBF6</name>
    <name type="ordered locus">At4g34590</name>
    <name evidence="16" type="ORF">T4L20.170</name>
</gene>
<comment type="function">
    <text evidence="3 6 7 8">Transcription factor that binds to the DNA sequence 5'-ACTCAT-3' in target gene promoters. Promotes POX1/PRODH1 expression in response to hypoosmolarity stress (PubMed:15047879). Positively regulates the expression of ASN1 and POX2/PRODH2 genes, which are involved in amino acid metabolism (PubMed:18088315). Regulates several metabolic pathways such as myo-inositol, raffinose and trehalose. Regulates several trehalose metabolism genes, including TRE1, TPP5 and TPP6 (PubMed:21534971). Mediates recruitment of the histone acetylation machinery to activate auxin-induced transcription. Interacts with ADA2B adapter protein to promote ADA2B-mediated recruitment of SAGA-like histone acetyltransferase complexes to specific auxin-responsive genes (PubMed:24861440).</text>
</comment>
<comment type="subunit">
    <text evidence="5 8 9">Forms heterodimers with BZIP1, BZIP9, BZIP10, BZIP25 and BZIP63 (PubMed:16709202). Interacts with ADA2B (PubMed:24861440).</text>
</comment>
<comment type="interaction">
    <interactant intactId="EBI-942769">
        <id>O65683</id>
    </interactant>
    <interactant intactId="EBI-942623">
        <id>Q9FGX2</id>
        <label>BZIP1</label>
    </interactant>
    <organismsDiffer>false</organismsDiffer>
    <experiments>5</experiments>
</comment>
<comment type="interaction">
    <interactant intactId="EBI-942769">
        <id>O65683</id>
    </interactant>
    <interactant intactId="EBI-942648">
        <id>O22763</id>
        <label>BZIP10</label>
    </interactant>
    <organismsDiffer>false</organismsDiffer>
    <experiments>3</experiments>
</comment>
<comment type="interaction">
    <interactant intactId="EBI-942769">
        <id>O65683</id>
    </interactant>
    <interactant intactId="EBI-942696">
        <id>Q9M1G6</id>
        <label>BZIP25</label>
    </interactant>
    <organismsDiffer>false</organismsDiffer>
    <experiments>6</experiments>
</comment>
<comment type="interaction">
    <interactant intactId="EBI-942769">
        <id>O65683</id>
    </interactant>
    <interactant intactId="EBI-942845">
        <id>Q9LZP8</id>
        <label>BZIP53</label>
    </interactant>
    <organismsDiffer>false</organismsDiffer>
    <experiments>3</experiments>
</comment>
<comment type="interaction">
    <interactant intactId="EBI-942769">
        <id>O65683</id>
    </interactant>
    <interactant intactId="EBI-942713">
        <id>B9DGI8</id>
        <label>BZIP63</label>
    </interactant>
    <organismsDiffer>false</organismsDiffer>
    <experiments>4</experiments>
</comment>
<comment type="interaction">
    <interactant intactId="EBI-942769">
        <id>O65683</id>
    </interactant>
    <interactant intactId="EBI-942633">
        <id>Q9FUD3</id>
        <label>BZIP9</label>
    </interactant>
    <organismsDiffer>false</organismsDiffer>
    <experiments>3</experiments>
</comment>
<comment type="subcellular location">
    <subcellularLocation>
        <location evidence="1 3">Nucleus</location>
    </subcellularLocation>
</comment>
<comment type="tissue specificity">
    <text evidence="10 11">Highly expressed in stems and flowers (PubMed:9620274). Expressed in root tips, cotyledons, leaf vasculature, embryos, apical parts of siliques and funiculi (PubMed:9721683).</text>
</comment>
<comment type="induction">
    <text evidence="3 4 10 11">By light (PubMed:9620274). Induced by hypoosmolarity (PubMed:15047879). Repressed by sucrose (at protein level) (PubMed:15208401, PubMed:9721683).</text>
</comment>
<comment type="miscellaneous">
    <text evidence="4 6">A highly conserved upstream open reading frame (uORF) coding for 42 amino acids is essential for the BZIP11 sucrose-induced repression of translation (SIRT) (PubMed:15208401). Plants over-expressing BZIP11 show severe alterations of plant growth and development, reduced seed set and viability (PubMed:18088315).</text>
</comment>
<organism>
    <name type="scientific">Arabidopsis thaliana</name>
    <name type="common">Mouse-ear cress</name>
    <dbReference type="NCBI Taxonomy" id="3702"/>
    <lineage>
        <taxon>Eukaryota</taxon>
        <taxon>Viridiplantae</taxon>
        <taxon>Streptophyta</taxon>
        <taxon>Embryophyta</taxon>
        <taxon>Tracheophyta</taxon>
        <taxon>Spermatophyta</taxon>
        <taxon>Magnoliopsida</taxon>
        <taxon>eudicotyledons</taxon>
        <taxon>Gunneridae</taxon>
        <taxon>Pentapetalae</taxon>
        <taxon>rosids</taxon>
        <taxon>malvids</taxon>
        <taxon>Brassicales</taxon>
        <taxon>Brassicaceae</taxon>
        <taxon>Camelineae</taxon>
        <taxon>Arabidopsis</taxon>
    </lineage>
</organism>
<dbReference type="EMBL" id="Z82043">
    <property type="protein sequence ID" value="CAB04795.1"/>
    <property type="molecule type" value="Genomic_DNA"/>
</dbReference>
<dbReference type="EMBL" id="AF053940">
    <property type="protein sequence ID" value="AAG17475.1"/>
    <property type="molecule type" value="mRNA"/>
</dbReference>
<dbReference type="EMBL" id="X99747">
    <property type="protein sequence ID" value="CAA68078.1"/>
    <property type="molecule type" value="Genomic_DNA"/>
</dbReference>
<dbReference type="EMBL" id="AL023094">
    <property type="protein sequence ID" value="CAA18838.1"/>
    <property type="molecule type" value="Genomic_DNA"/>
</dbReference>
<dbReference type="EMBL" id="AL161585">
    <property type="protein sequence ID" value="CAB80176.1"/>
    <property type="molecule type" value="Genomic_DNA"/>
</dbReference>
<dbReference type="EMBL" id="CP002687">
    <property type="protein sequence ID" value="AEE86397.1"/>
    <property type="molecule type" value="Genomic_DNA"/>
</dbReference>
<dbReference type="EMBL" id="AY063979">
    <property type="protein sequence ID" value="AAL36335.1"/>
    <property type="molecule type" value="mRNA"/>
</dbReference>
<dbReference type="EMBL" id="AY096396">
    <property type="protein sequence ID" value="AAM20036.1"/>
    <property type="molecule type" value="mRNA"/>
</dbReference>
<dbReference type="PIR" id="T05279">
    <property type="entry name" value="T05279"/>
</dbReference>
<dbReference type="RefSeq" id="NP_195185.1">
    <property type="nucleotide sequence ID" value="NM_119625.3"/>
</dbReference>
<dbReference type="SMR" id="O65683"/>
<dbReference type="FunCoup" id="O65683">
    <property type="interactions" value="11"/>
</dbReference>
<dbReference type="IntAct" id="O65683">
    <property type="interactions" value="12"/>
</dbReference>
<dbReference type="MINT" id="O65683"/>
<dbReference type="STRING" id="3702.O65683"/>
<dbReference type="PaxDb" id="3702-AT4G34590.1"/>
<dbReference type="EnsemblPlants" id="AT4G34590.1">
    <property type="protein sequence ID" value="AT4G34590.1"/>
    <property type="gene ID" value="AT4G34590"/>
</dbReference>
<dbReference type="GeneID" id="829611"/>
<dbReference type="Gramene" id="AT4G34590.1">
    <property type="protein sequence ID" value="AT4G34590.1"/>
    <property type="gene ID" value="AT4G34590"/>
</dbReference>
<dbReference type="KEGG" id="ath:AT4G34590"/>
<dbReference type="Araport" id="AT4G34590"/>
<dbReference type="TAIR" id="AT4G34590">
    <property type="gene designation" value="GBF6"/>
</dbReference>
<dbReference type="eggNOG" id="ENOG502S0BS">
    <property type="taxonomic scope" value="Eukaryota"/>
</dbReference>
<dbReference type="HOGENOM" id="CLU_112634_1_0_1"/>
<dbReference type="InParanoid" id="O65683"/>
<dbReference type="OMA" id="LECDDFF"/>
<dbReference type="OrthoDB" id="551672at2759"/>
<dbReference type="PhylomeDB" id="O65683"/>
<dbReference type="PRO" id="PR:O65683"/>
<dbReference type="Proteomes" id="UP000006548">
    <property type="component" value="Chromosome 4"/>
</dbReference>
<dbReference type="ExpressionAtlas" id="O65683">
    <property type="expression patterns" value="baseline and differential"/>
</dbReference>
<dbReference type="GO" id="GO:0005634">
    <property type="term" value="C:nucleus"/>
    <property type="evidence" value="ECO:0000314"/>
    <property type="project" value="UniProtKB"/>
</dbReference>
<dbReference type="GO" id="GO:0003700">
    <property type="term" value="F:DNA-binding transcription factor activity"/>
    <property type="evidence" value="ECO:0000314"/>
    <property type="project" value="UniProtKB"/>
</dbReference>
<dbReference type="GO" id="GO:0046982">
    <property type="term" value="F:protein heterodimerization activity"/>
    <property type="evidence" value="ECO:0000353"/>
    <property type="project" value="UniProtKB"/>
</dbReference>
<dbReference type="GO" id="GO:0043565">
    <property type="term" value="F:sequence-specific DNA binding"/>
    <property type="evidence" value="ECO:0000314"/>
    <property type="project" value="UniProtKB"/>
</dbReference>
<dbReference type="GO" id="GO:0000976">
    <property type="term" value="F:transcription cis-regulatory region binding"/>
    <property type="evidence" value="ECO:0000353"/>
    <property type="project" value="TAIR"/>
</dbReference>
<dbReference type="GO" id="GO:0017148">
    <property type="term" value="P:negative regulation of translation"/>
    <property type="evidence" value="ECO:0000315"/>
    <property type="project" value="TAIR"/>
</dbReference>
<dbReference type="GO" id="GO:0045893">
    <property type="term" value="P:positive regulation of DNA-templated transcription"/>
    <property type="evidence" value="ECO:0000314"/>
    <property type="project" value="UniProtKB"/>
</dbReference>
<dbReference type="GO" id="GO:0009744">
    <property type="term" value="P:response to sucrose"/>
    <property type="evidence" value="ECO:0000270"/>
    <property type="project" value="TAIR"/>
</dbReference>
<dbReference type="GO" id="GO:0080149">
    <property type="term" value="P:sucrose induced translational repression"/>
    <property type="evidence" value="ECO:0000315"/>
    <property type="project" value="TAIR"/>
</dbReference>
<dbReference type="CDD" id="cd14702">
    <property type="entry name" value="bZIP_plant_GBF1"/>
    <property type="match status" value="1"/>
</dbReference>
<dbReference type="FunFam" id="1.20.5.170:FF:000020">
    <property type="entry name" value="BZIP transcription factor"/>
    <property type="match status" value="1"/>
</dbReference>
<dbReference type="Gene3D" id="1.20.5.170">
    <property type="match status" value="1"/>
</dbReference>
<dbReference type="InterPro" id="IPR004827">
    <property type="entry name" value="bZIP"/>
</dbReference>
<dbReference type="InterPro" id="IPR045314">
    <property type="entry name" value="bZIP_plant_GBF1"/>
</dbReference>
<dbReference type="InterPro" id="IPR046347">
    <property type="entry name" value="bZIP_sf"/>
</dbReference>
<dbReference type="PANTHER" id="PTHR45764:SF82">
    <property type="entry name" value="BZIP TRANSCRIPTION FACTOR 11"/>
    <property type="match status" value="1"/>
</dbReference>
<dbReference type="PANTHER" id="PTHR45764">
    <property type="entry name" value="BZIP TRANSCRIPTION FACTOR 44"/>
    <property type="match status" value="1"/>
</dbReference>
<dbReference type="Pfam" id="PF00170">
    <property type="entry name" value="bZIP_1"/>
    <property type="match status" value="1"/>
</dbReference>
<dbReference type="SMART" id="SM00338">
    <property type="entry name" value="BRLZ"/>
    <property type="match status" value="1"/>
</dbReference>
<dbReference type="SUPFAM" id="SSF57959">
    <property type="entry name" value="Leucine zipper domain"/>
    <property type="match status" value="1"/>
</dbReference>
<dbReference type="PROSITE" id="PS50217">
    <property type="entry name" value="BZIP"/>
    <property type="match status" value="1"/>
</dbReference>
<dbReference type="PROSITE" id="PS00036">
    <property type="entry name" value="BZIP_BASIC"/>
    <property type="match status" value="1"/>
</dbReference>
<protein>
    <recommendedName>
        <fullName evidence="15">bZIP transcription factor 11</fullName>
        <shortName evidence="12">AtbZIP11</shortName>
    </recommendedName>
    <alternativeName>
        <fullName evidence="14">G-box-binding factor 6</fullName>
    </alternativeName>
    <alternativeName>
        <fullName evidence="13">bZIP transcription factor ATB2</fullName>
    </alternativeName>
</protein>
<feature type="chain" id="PRO_0000436840" description="bZIP transcription factor 11">
    <location>
        <begin position="1"/>
        <end position="159"/>
    </location>
</feature>
<feature type="domain" description="bZIP" evidence="1">
    <location>
        <begin position="25"/>
        <end position="88"/>
    </location>
</feature>
<feature type="region of interest" description="Disordered" evidence="2">
    <location>
        <begin position="1"/>
        <end position="47"/>
    </location>
</feature>
<feature type="region of interest" description="Basic motif" evidence="1">
    <location>
        <begin position="27"/>
        <end position="48"/>
    </location>
</feature>
<feature type="region of interest" description="Leucine-zipper" evidence="1">
    <location>
        <begin position="53"/>
        <end position="67"/>
    </location>
</feature>
<feature type="compositionally biased region" description="Low complexity" evidence="2">
    <location>
        <begin position="1"/>
        <end position="21"/>
    </location>
</feature>
<feature type="sequence conflict" description="In Ref. 1; CAB04795, 3; CAA68078 and 2; AAG17475." evidence="15" ref="1 3 2">
    <original>S</original>
    <variation>SN</variation>
    <location>
        <position position="112"/>
    </location>
</feature>
<reference key="1">
    <citation type="journal article" date="1997" name="Nucleic Acids Res.">
        <title>Analysis of the chromatin domain organisation around the plastocyanin gene reveals an MAR-specific sequence element in Arabidopsis thaliana.</title>
        <authorList>
            <person name="van Drunen C.M."/>
            <person name="Oosterling R.W."/>
            <person name="Keultjes G.M."/>
            <person name="Weisbeek P.J."/>
            <person name="van Driel R."/>
            <person name="Smeekens S.C.M."/>
        </authorList>
    </citation>
    <scope>NUCLEOTIDE SEQUENCE [GENOMIC DNA]</scope>
    <source>
        <strain>cv. Columbia</strain>
    </source>
</reference>
<reference key="2">
    <citation type="journal article" date="1998" name="Plant Mol. Biol.">
        <title>The light-regulated Arabidopsis bZIP transcription factor gene ATB2 encodes a protein with an unusually long leucine zipper domain.</title>
        <authorList>
            <person name="Rook F."/>
            <person name="Weisbeek P."/>
            <person name="Smeekens S."/>
        </authorList>
    </citation>
    <scope>NUCLEOTIDE SEQUENCE [GENOMIC DNA]</scope>
    <scope>INDUCTION BY LIGHT</scope>
</reference>
<reference key="3">
    <citation type="submission" date="1998-03" db="EMBL/GenBank/DDBJ databases">
        <title>GBF5 and GBF6: two bZIP proteins from Arabidopsis that belong to a new subfamily of the GBF transcription factors.</title>
        <authorList>
            <person name="Jarillo J.A."/>
            <person name="Cashmore A.R."/>
        </authorList>
    </citation>
    <scope>NUCLEOTIDE SEQUENCE [MRNA]</scope>
    <source>
        <strain>cv. Columbia</strain>
    </source>
</reference>
<reference key="4">
    <citation type="journal article" date="1999" name="Nature">
        <title>Sequence and analysis of chromosome 4 of the plant Arabidopsis thaliana.</title>
        <authorList>
            <person name="Mayer K.F.X."/>
            <person name="Schueller C."/>
            <person name="Wambutt R."/>
            <person name="Murphy G."/>
            <person name="Volckaert G."/>
            <person name="Pohl T."/>
            <person name="Duesterhoeft A."/>
            <person name="Stiekema W."/>
            <person name="Entian K.-D."/>
            <person name="Terryn N."/>
            <person name="Harris B."/>
            <person name="Ansorge W."/>
            <person name="Brandt P."/>
            <person name="Grivell L.A."/>
            <person name="Rieger M."/>
            <person name="Weichselgartner M."/>
            <person name="de Simone V."/>
            <person name="Obermaier B."/>
            <person name="Mache R."/>
            <person name="Mueller M."/>
            <person name="Kreis M."/>
            <person name="Delseny M."/>
            <person name="Puigdomenech P."/>
            <person name="Watson M."/>
            <person name="Schmidtheini T."/>
            <person name="Reichert B."/>
            <person name="Portetelle D."/>
            <person name="Perez-Alonso M."/>
            <person name="Boutry M."/>
            <person name="Bancroft I."/>
            <person name="Vos P."/>
            <person name="Hoheisel J."/>
            <person name="Zimmermann W."/>
            <person name="Wedler H."/>
            <person name="Ridley P."/>
            <person name="Langham S.-A."/>
            <person name="McCullagh B."/>
            <person name="Bilham L."/>
            <person name="Robben J."/>
            <person name="van der Schueren J."/>
            <person name="Grymonprez B."/>
            <person name="Chuang Y.-J."/>
            <person name="Vandenbussche F."/>
            <person name="Braeken M."/>
            <person name="Weltjens I."/>
            <person name="Voet M."/>
            <person name="Bastiaens I."/>
            <person name="Aert R."/>
            <person name="Defoor E."/>
            <person name="Weitzenegger T."/>
            <person name="Bothe G."/>
            <person name="Ramsperger U."/>
            <person name="Hilbert H."/>
            <person name="Braun M."/>
            <person name="Holzer E."/>
            <person name="Brandt A."/>
            <person name="Peters S."/>
            <person name="van Staveren M."/>
            <person name="Dirkse W."/>
            <person name="Mooijman P."/>
            <person name="Klein Lankhorst R."/>
            <person name="Rose M."/>
            <person name="Hauf J."/>
            <person name="Koetter P."/>
            <person name="Berneiser S."/>
            <person name="Hempel S."/>
            <person name="Feldpausch M."/>
            <person name="Lamberth S."/>
            <person name="Van den Daele H."/>
            <person name="De Keyser A."/>
            <person name="Buysshaert C."/>
            <person name="Gielen J."/>
            <person name="Villarroel R."/>
            <person name="De Clercq R."/>
            <person name="van Montagu M."/>
            <person name="Rogers J."/>
            <person name="Cronin A."/>
            <person name="Quail M.A."/>
            <person name="Bray-Allen S."/>
            <person name="Clark L."/>
            <person name="Doggett J."/>
            <person name="Hall S."/>
            <person name="Kay M."/>
            <person name="Lennard N."/>
            <person name="McLay K."/>
            <person name="Mayes R."/>
            <person name="Pettett A."/>
            <person name="Rajandream M.A."/>
            <person name="Lyne M."/>
            <person name="Benes V."/>
            <person name="Rechmann S."/>
            <person name="Borkova D."/>
            <person name="Bloecker H."/>
            <person name="Scharfe M."/>
            <person name="Grimm M."/>
            <person name="Loehnert T.-H."/>
            <person name="Dose S."/>
            <person name="de Haan M."/>
            <person name="Maarse A.C."/>
            <person name="Schaefer M."/>
            <person name="Mueller-Auer S."/>
            <person name="Gabel C."/>
            <person name="Fuchs M."/>
            <person name="Fartmann B."/>
            <person name="Granderath K."/>
            <person name="Dauner D."/>
            <person name="Herzl A."/>
            <person name="Neumann S."/>
            <person name="Argiriou A."/>
            <person name="Vitale D."/>
            <person name="Liguori R."/>
            <person name="Piravandi E."/>
            <person name="Massenet O."/>
            <person name="Quigley F."/>
            <person name="Clabauld G."/>
            <person name="Muendlein A."/>
            <person name="Felber R."/>
            <person name="Schnabl S."/>
            <person name="Hiller R."/>
            <person name="Schmidt W."/>
            <person name="Lecharny A."/>
            <person name="Aubourg S."/>
            <person name="Chefdor F."/>
            <person name="Cooke R."/>
            <person name="Berger C."/>
            <person name="Monfort A."/>
            <person name="Casacuberta E."/>
            <person name="Gibbons T."/>
            <person name="Weber N."/>
            <person name="Vandenbol M."/>
            <person name="Bargues M."/>
            <person name="Terol J."/>
            <person name="Torres A."/>
            <person name="Perez-Perez A."/>
            <person name="Purnelle B."/>
            <person name="Bent E."/>
            <person name="Johnson S."/>
            <person name="Tacon D."/>
            <person name="Jesse T."/>
            <person name="Heijnen L."/>
            <person name="Schwarz S."/>
            <person name="Scholler P."/>
            <person name="Heber S."/>
            <person name="Francs P."/>
            <person name="Bielke C."/>
            <person name="Frishman D."/>
            <person name="Haase D."/>
            <person name="Lemcke K."/>
            <person name="Mewes H.-W."/>
            <person name="Stocker S."/>
            <person name="Zaccaria P."/>
            <person name="Bevan M."/>
            <person name="Wilson R.K."/>
            <person name="de la Bastide M."/>
            <person name="Habermann K."/>
            <person name="Parnell L."/>
            <person name="Dedhia N."/>
            <person name="Gnoj L."/>
            <person name="Schutz K."/>
            <person name="Huang E."/>
            <person name="Spiegel L."/>
            <person name="Sekhon M."/>
            <person name="Murray J."/>
            <person name="Sheet P."/>
            <person name="Cordes M."/>
            <person name="Abu-Threideh J."/>
            <person name="Stoneking T."/>
            <person name="Kalicki J."/>
            <person name="Graves T."/>
            <person name="Harmon G."/>
            <person name="Edwards J."/>
            <person name="Latreille P."/>
            <person name="Courtney L."/>
            <person name="Cloud J."/>
            <person name="Abbott A."/>
            <person name="Scott K."/>
            <person name="Johnson D."/>
            <person name="Minx P."/>
            <person name="Bentley D."/>
            <person name="Fulton B."/>
            <person name="Miller N."/>
            <person name="Greco T."/>
            <person name="Kemp K."/>
            <person name="Kramer J."/>
            <person name="Fulton L."/>
            <person name="Mardis E."/>
            <person name="Dante M."/>
            <person name="Pepin K."/>
            <person name="Hillier L.W."/>
            <person name="Nelson J."/>
            <person name="Spieth J."/>
            <person name="Ryan E."/>
            <person name="Andrews S."/>
            <person name="Geisel C."/>
            <person name="Layman D."/>
            <person name="Du H."/>
            <person name="Ali J."/>
            <person name="Berghoff A."/>
            <person name="Jones K."/>
            <person name="Drone K."/>
            <person name="Cotton M."/>
            <person name="Joshu C."/>
            <person name="Antonoiu B."/>
            <person name="Zidanic M."/>
            <person name="Strong C."/>
            <person name="Sun H."/>
            <person name="Lamar B."/>
            <person name="Yordan C."/>
            <person name="Ma P."/>
            <person name="Zhong J."/>
            <person name="Preston R."/>
            <person name="Vil D."/>
            <person name="Shekher M."/>
            <person name="Matero A."/>
            <person name="Shah R."/>
            <person name="Swaby I.K."/>
            <person name="O'Shaughnessy A."/>
            <person name="Rodriguez M."/>
            <person name="Hoffman J."/>
            <person name="Till S."/>
            <person name="Granat S."/>
            <person name="Shohdy N."/>
            <person name="Hasegawa A."/>
            <person name="Hameed A."/>
            <person name="Lodhi M."/>
            <person name="Johnson A."/>
            <person name="Chen E."/>
            <person name="Marra M.A."/>
            <person name="Martienssen R."/>
            <person name="McCombie W.R."/>
        </authorList>
    </citation>
    <scope>NUCLEOTIDE SEQUENCE [LARGE SCALE GENOMIC DNA]</scope>
    <source>
        <strain>cv. Columbia</strain>
    </source>
</reference>
<reference key="5">
    <citation type="journal article" date="2017" name="Plant J.">
        <title>Araport11: a complete reannotation of the Arabidopsis thaliana reference genome.</title>
        <authorList>
            <person name="Cheng C.Y."/>
            <person name="Krishnakumar V."/>
            <person name="Chan A.P."/>
            <person name="Thibaud-Nissen F."/>
            <person name="Schobel S."/>
            <person name="Town C.D."/>
        </authorList>
    </citation>
    <scope>GENOME REANNOTATION</scope>
    <source>
        <strain>cv. Columbia</strain>
    </source>
</reference>
<reference key="6">
    <citation type="journal article" date="2003" name="Science">
        <title>Empirical analysis of transcriptional activity in the Arabidopsis genome.</title>
        <authorList>
            <person name="Yamada K."/>
            <person name="Lim J."/>
            <person name="Dale J.M."/>
            <person name="Chen H."/>
            <person name="Shinn P."/>
            <person name="Palm C.J."/>
            <person name="Southwick A.M."/>
            <person name="Wu H.C."/>
            <person name="Kim C.J."/>
            <person name="Nguyen M."/>
            <person name="Pham P.K."/>
            <person name="Cheuk R.F."/>
            <person name="Karlin-Newmann G."/>
            <person name="Liu S.X."/>
            <person name="Lam B."/>
            <person name="Sakano H."/>
            <person name="Wu T."/>
            <person name="Yu G."/>
            <person name="Miranda M."/>
            <person name="Quach H.L."/>
            <person name="Tripp M."/>
            <person name="Chang C.H."/>
            <person name="Lee J.M."/>
            <person name="Toriumi M.J."/>
            <person name="Chan M.M."/>
            <person name="Tang C.C."/>
            <person name="Onodera C.S."/>
            <person name="Deng J.M."/>
            <person name="Akiyama K."/>
            <person name="Ansari Y."/>
            <person name="Arakawa T."/>
            <person name="Banh J."/>
            <person name="Banno F."/>
            <person name="Bowser L."/>
            <person name="Brooks S.Y."/>
            <person name="Carninci P."/>
            <person name="Chao Q."/>
            <person name="Choy N."/>
            <person name="Enju A."/>
            <person name="Goldsmith A.D."/>
            <person name="Gurjal M."/>
            <person name="Hansen N.F."/>
            <person name="Hayashizaki Y."/>
            <person name="Johnson-Hopson C."/>
            <person name="Hsuan V.W."/>
            <person name="Iida K."/>
            <person name="Karnes M."/>
            <person name="Khan S."/>
            <person name="Koesema E."/>
            <person name="Ishida J."/>
            <person name="Jiang P.X."/>
            <person name="Jones T."/>
            <person name="Kawai J."/>
            <person name="Kamiya A."/>
            <person name="Meyers C."/>
            <person name="Nakajima M."/>
            <person name="Narusaka M."/>
            <person name="Seki M."/>
            <person name="Sakurai T."/>
            <person name="Satou M."/>
            <person name="Tamse R."/>
            <person name="Vaysberg M."/>
            <person name="Wallender E.K."/>
            <person name="Wong C."/>
            <person name="Yamamura Y."/>
            <person name="Yuan S."/>
            <person name="Shinozaki K."/>
            <person name="Davis R.W."/>
            <person name="Theologis A."/>
            <person name="Ecker J.R."/>
        </authorList>
    </citation>
    <scope>NUCLEOTIDE SEQUENCE [LARGE SCALE MRNA]</scope>
    <source>
        <strain>cv. Columbia</strain>
    </source>
</reference>
<reference key="7">
    <citation type="journal article" date="1998" name="Plant J.">
        <title>Sucrose-specific signalling represses translation of the Arabidopsis ATB2 bZIP transcription factor gene.</title>
        <authorList>
            <person name="Rook F."/>
            <person name="Gerrits N."/>
            <person name="Kortstee A."/>
            <person name="van Kampen M."/>
            <person name="Borrias M."/>
            <person name="Weisbeek P."/>
            <person name="Smeekens S."/>
        </authorList>
    </citation>
    <scope>TISSUE SPECIFICITY</scope>
    <scope>INDUCTION</scope>
</reference>
<reference key="8">
    <citation type="journal article" date="2002" name="Trends Plant Sci.">
        <title>bZIP transcription factors in Arabidopsis.</title>
        <authorList>
            <person name="Jakoby M."/>
            <person name="Weisshaar B."/>
            <person name="Droege-Laser W."/>
            <person name="Vicente-Carbajosa J."/>
            <person name="Tiedemann J."/>
            <person name="Kroj T."/>
            <person name="Parcy F."/>
        </authorList>
    </citation>
    <scope>GENE FAMILY</scope>
    <scope>NOMENCLATURE</scope>
</reference>
<reference key="9">
    <citation type="journal article" date="2004" name="Plant Cell">
        <title>A conserved upstream open reading frame mediates sucrose-induced repression of translation.</title>
        <authorList>
            <person name="Wiese A."/>
            <person name="Elzinga N."/>
            <person name="Wobbes B."/>
            <person name="Smeekens S."/>
        </authorList>
    </citation>
    <scope>INDUCTION</scope>
</reference>
<reference key="10">
    <citation type="journal article" date="2004" name="Plant Cell Physiol.">
        <title>A novel subgroup of bZIP proteins functions as transcriptional activators in hypoosmolarity-responsive expression of the ProDH gene in Arabidopsis.</title>
        <authorList>
            <person name="Satoh R."/>
            <person name="Fujita Y."/>
            <person name="Nakashima K."/>
            <person name="Shinozaki K."/>
            <person name="Yamaguchi-Shinozaki K."/>
        </authorList>
    </citation>
    <scope>FUNCTION</scope>
    <scope>SUBCELLULAR LOCATION</scope>
    <scope>INDUCTION BY HYPOOSMOLARITY</scope>
    <source>
        <strain>cv. Columbia</strain>
    </source>
</reference>
<reference key="11">
    <citation type="journal article" date="2006" name="Plant J.">
        <title>Two-hybrid protein-protein interaction analysis in Arabidopsis protoplasts: establishment of a heterodimerization map of group C and group S bZIP transcription factors.</title>
        <authorList>
            <person name="Ehlert A."/>
            <person name="Weltmeier F."/>
            <person name="Wang X."/>
            <person name="Mayer C.S."/>
            <person name="Smeekens S."/>
            <person name="Vicente-Carbajosa J."/>
            <person name="Droege-Laser W."/>
        </authorList>
    </citation>
    <scope>INTERACTION WITH BZIP1; BZIP9; BZIP10; BZIP25 AND BZIP63</scope>
</reference>
<reference key="12">
    <citation type="journal article" date="2008" name="Plant J.">
        <title>The sucrose regulated transcription factor bZIP11 affects amino acid metabolism by regulating the expression of ASPARAGINE SYNTHETASE1 and PROLINE DEHYDROGENASE2.</title>
        <authorList>
            <person name="Hanson J."/>
            <person name="Hanssen M."/>
            <person name="Wiese A."/>
            <person name="Hendriks M.M."/>
            <person name="Smeekens S."/>
        </authorList>
    </citation>
    <scope>FUNCTION</scope>
</reference>
<reference key="13">
    <citation type="journal article" date="2011" name="New Phytol.">
        <title>The sucrose-regulated Arabidopsis transcription factor bZIP11 reprograms metabolism and regulates trehalose metabolism.</title>
        <authorList>
            <person name="Ma J."/>
            <person name="Hanssen M."/>
            <person name="Lundgren K."/>
            <person name="Hernandez L."/>
            <person name="Delatte T."/>
            <person name="Ehlert A."/>
            <person name="Liu C.M."/>
            <person name="Schluepmann H."/>
            <person name="Droege-Laser W."/>
            <person name="Moritz T."/>
            <person name="Smeekens S."/>
            <person name="Hanson J."/>
        </authorList>
    </citation>
    <scope>FUNCTION</scope>
</reference>
<reference key="14">
    <citation type="journal article" date="2014" name="Nat. Commun.">
        <title>The Arabidopsis transcription factor bZIP11 activates auxin-mediated transcription by recruiting the histone acetylation machinery.</title>
        <authorList>
            <person name="Weiste C."/>
            <person name="Droege-Laser W."/>
        </authorList>
    </citation>
    <scope>FUNCTION</scope>
    <scope>INTERACTION WITH ADA2B</scope>
</reference>
<reference key="15">
    <citation type="journal article" date="2015" name="Elife">
        <title>SnRK1-triggered switch of bZIP63 dimerization mediates the low-energy response in plants.</title>
        <authorList>
            <person name="Mair A."/>
            <person name="Pedrotti L."/>
            <person name="Wurzinger B."/>
            <person name="Anrather D."/>
            <person name="Simeunovic A."/>
            <person name="Weiste C."/>
            <person name="Valerio C."/>
            <person name="Dietrich K."/>
            <person name="Kirchler T."/>
            <person name="Naegele T."/>
            <person name="Vicente Carbajosa J."/>
            <person name="Hanson J."/>
            <person name="Baena-Gonzalez E."/>
            <person name="Chaban C."/>
            <person name="Weckwerth W."/>
            <person name="Droege-Laser W."/>
            <person name="Teige M."/>
        </authorList>
    </citation>
    <scope>INTERACTION WITH BZIP63</scope>
</reference>
<evidence type="ECO:0000255" key="1">
    <source>
        <dbReference type="PROSITE-ProRule" id="PRU00978"/>
    </source>
</evidence>
<evidence type="ECO:0000256" key="2">
    <source>
        <dbReference type="SAM" id="MobiDB-lite"/>
    </source>
</evidence>
<evidence type="ECO:0000269" key="3">
    <source>
    </source>
</evidence>
<evidence type="ECO:0000269" key="4">
    <source>
    </source>
</evidence>
<evidence type="ECO:0000269" key="5">
    <source>
    </source>
</evidence>
<evidence type="ECO:0000269" key="6">
    <source>
    </source>
</evidence>
<evidence type="ECO:0000269" key="7">
    <source>
    </source>
</evidence>
<evidence type="ECO:0000269" key="8">
    <source>
    </source>
</evidence>
<evidence type="ECO:0000269" key="9">
    <source>
    </source>
</evidence>
<evidence type="ECO:0000269" key="10">
    <source>
    </source>
</evidence>
<evidence type="ECO:0000269" key="11">
    <source>
    </source>
</evidence>
<evidence type="ECO:0000303" key="12">
    <source>
    </source>
</evidence>
<evidence type="ECO:0000303" key="13">
    <source>
    </source>
</evidence>
<evidence type="ECO:0000303" key="14">
    <source ref="3"/>
</evidence>
<evidence type="ECO:0000305" key="15"/>
<evidence type="ECO:0000312" key="16">
    <source>
        <dbReference type="EMBL" id="CAA18838.1"/>
    </source>
</evidence>